<organism>
    <name type="scientific">Cupriavidus pinatubonensis (strain JMP 134 / LMG 1197)</name>
    <name type="common">Cupriavidus necator (strain JMP 134)</name>
    <dbReference type="NCBI Taxonomy" id="264198"/>
    <lineage>
        <taxon>Bacteria</taxon>
        <taxon>Pseudomonadati</taxon>
        <taxon>Pseudomonadota</taxon>
        <taxon>Betaproteobacteria</taxon>
        <taxon>Burkholderiales</taxon>
        <taxon>Burkholderiaceae</taxon>
        <taxon>Cupriavidus</taxon>
    </lineage>
</organism>
<proteinExistence type="inferred from homology"/>
<accession>Q46WM3</accession>
<feature type="chain" id="PRO_1000044427" description="Sec-independent protein translocase protein TatA">
    <location>
        <begin position="1"/>
        <end position="73"/>
    </location>
</feature>
<feature type="transmembrane region" description="Helical" evidence="1">
    <location>
        <begin position="1"/>
        <end position="21"/>
    </location>
</feature>
<feature type="region of interest" description="Disordered" evidence="2">
    <location>
        <begin position="43"/>
        <end position="73"/>
    </location>
</feature>
<name>TATA_CUPPJ</name>
<protein>
    <recommendedName>
        <fullName evidence="1">Sec-independent protein translocase protein TatA</fullName>
    </recommendedName>
</protein>
<reference key="1">
    <citation type="journal article" date="2010" name="PLoS ONE">
        <title>The complete multipartite genome sequence of Cupriavidus necator JMP134, a versatile pollutant degrader.</title>
        <authorList>
            <person name="Lykidis A."/>
            <person name="Perez-Pantoja D."/>
            <person name="Ledger T."/>
            <person name="Mavromatis K."/>
            <person name="Anderson I.J."/>
            <person name="Ivanova N.N."/>
            <person name="Hooper S.D."/>
            <person name="Lapidus A."/>
            <person name="Lucas S."/>
            <person name="Gonzalez B."/>
            <person name="Kyrpides N.C."/>
        </authorList>
    </citation>
    <scope>NUCLEOTIDE SEQUENCE [LARGE SCALE GENOMIC DNA]</scope>
    <source>
        <strain>JMP134 / LMG 1197</strain>
    </source>
</reference>
<evidence type="ECO:0000255" key="1">
    <source>
        <dbReference type="HAMAP-Rule" id="MF_00236"/>
    </source>
</evidence>
<evidence type="ECO:0000256" key="2">
    <source>
        <dbReference type="SAM" id="MobiDB-lite"/>
    </source>
</evidence>
<keyword id="KW-0997">Cell inner membrane</keyword>
<keyword id="KW-1003">Cell membrane</keyword>
<keyword id="KW-0472">Membrane</keyword>
<keyword id="KW-0653">Protein transport</keyword>
<keyword id="KW-0811">Translocation</keyword>
<keyword id="KW-0812">Transmembrane</keyword>
<keyword id="KW-1133">Transmembrane helix</keyword>
<keyword id="KW-0813">Transport</keyword>
<dbReference type="EMBL" id="CP000090">
    <property type="protein sequence ID" value="AAZ62460.1"/>
    <property type="molecule type" value="Genomic_DNA"/>
</dbReference>
<dbReference type="SMR" id="Q46WM3"/>
<dbReference type="STRING" id="264198.Reut_A3100"/>
<dbReference type="KEGG" id="reu:Reut_A3100"/>
<dbReference type="eggNOG" id="COG1826">
    <property type="taxonomic scope" value="Bacteria"/>
</dbReference>
<dbReference type="HOGENOM" id="CLU_086034_5_3_4"/>
<dbReference type="OrthoDB" id="7066617at2"/>
<dbReference type="GO" id="GO:0033281">
    <property type="term" value="C:TAT protein transport complex"/>
    <property type="evidence" value="ECO:0007669"/>
    <property type="project" value="UniProtKB-UniRule"/>
</dbReference>
<dbReference type="GO" id="GO:0008320">
    <property type="term" value="F:protein transmembrane transporter activity"/>
    <property type="evidence" value="ECO:0007669"/>
    <property type="project" value="UniProtKB-UniRule"/>
</dbReference>
<dbReference type="GO" id="GO:0043953">
    <property type="term" value="P:protein transport by the Tat complex"/>
    <property type="evidence" value="ECO:0007669"/>
    <property type="project" value="UniProtKB-UniRule"/>
</dbReference>
<dbReference type="Gene3D" id="1.20.5.3310">
    <property type="match status" value="1"/>
</dbReference>
<dbReference type="HAMAP" id="MF_00236">
    <property type="entry name" value="TatA_E"/>
    <property type="match status" value="1"/>
</dbReference>
<dbReference type="InterPro" id="IPR003369">
    <property type="entry name" value="TatA/B/E"/>
</dbReference>
<dbReference type="InterPro" id="IPR006312">
    <property type="entry name" value="TatA/E"/>
</dbReference>
<dbReference type="NCBIfam" id="NF002813">
    <property type="entry name" value="PRK02958.1"/>
    <property type="match status" value="1"/>
</dbReference>
<dbReference type="NCBIfam" id="TIGR01411">
    <property type="entry name" value="tatAE"/>
    <property type="match status" value="1"/>
</dbReference>
<dbReference type="PANTHER" id="PTHR42982">
    <property type="entry name" value="SEC-INDEPENDENT PROTEIN TRANSLOCASE PROTEIN TATA"/>
    <property type="match status" value="1"/>
</dbReference>
<dbReference type="PANTHER" id="PTHR42982:SF1">
    <property type="entry name" value="SEC-INDEPENDENT PROTEIN TRANSLOCASE PROTEIN TATA"/>
    <property type="match status" value="1"/>
</dbReference>
<dbReference type="Pfam" id="PF02416">
    <property type="entry name" value="TatA_B_E"/>
    <property type="match status" value="1"/>
</dbReference>
<sequence>MGSFSIWHWLIVLVIVMLVFGTKKLRNIGQDLGGAVKGFKDGMKEGDDKAAPAKELRDSTTIDVDAKEKTRQQ</sequence>
<comment type="function">
    <text evidence="1">Part of the twin-arginine translocation (Tat) system that transports large folded proteins containing a characteristic twin-arginine motif in their signal peptide across membranes. TatA could form the protein-conducting channel of the Tat system.</text>
</comment>
<comment type="subunit">
    <text evidence="1">The Tat system comprises two distinct complexes: a TatABC complex, containing multiple copies of TatA, TatB and TatC subunits, and a separate TatA complex, containing only TatA subunits. Substrates initially bind to the TatABC complex, which probably triggers association of the separate TatA complex to form the active translocon.</text>
</comment>
<comment type="subcellular location">
    <subcellularLocation>
        <location evidence="1">Cell inner membrane</location>
        <topology evidence="1">Single-pass membrane protein</topology>
    </subcellularLocation>
</comment>
<comment type="similarity">
    <text evidence="1">Belongs to the TatA/E family.</text>
</comment>
<gene>
    <name evidence="1" type="primary">tatA</name>
    <name type="ordered locus">Reut_A3100</name>
</gene>